<evidence type="ECO:0000250" key="1"/>
<evidence type="ECO:0000255" key="2"/>
<evidence type="ECO:0000255" key="3">
    <source>
        <dbReference type="PROSITE-ProRule" id="PRU00210"/>
    </source>
</evidence>
<evidence type="ECO:0000255" key="4">
    <source>
        <dbReference type="PROSITE-ProRule" id="PRU00276"/>
    </source>
</evidence>
<evidence type="ECO:0000255" key="5">
    <source>
        <dbReference type="PROSITE-ProRule" id="PRU10095"/>
    </source>
</evidence>
<evidence type="ECO:0000269" key="6">
    <source>
    </source>
</evidence>
<evidence type="ECO:0000269" key="7">
    <source>
    </source>
</evidence>
<evidence type="ECO:0000269" key="8">
    <source>
    </source>
</evidence>
<evidence type="ECO:0000269" key="9">
    <source>
    </source>
</evidence>
<evidence type="ECO:0000269" key="10">
    <source>
    </source>
</evidence>
<evidence type="ECO:0000269" key="11">
    <source>
    </source>
</evidence>
<evidence type="ECO:0000269" key="12">
    <source>
    </source>
</evidence>
<evidence type="ECO:0000269" key="13">
    <source>
    </source>
</evidence>
<evidence type="ECO:0000269" key="14">
    <source>
    </source>
</evidence>
<evidence type="ECO:0000269" key="15">
    <source>
    </source>
</evidence>
<evidence type="ECO:0000303" key="16">
    <source>
    </source>
</evidence>
<evidence type="ECO:0000305" key="17"/>
<evidence type="ECO:0007829" key="18">
    <source>
        <dbReference type="PDB" id="2RJP"/>
    </source>
</evidence>
<evidence type="ECO:0007829" key="19">
    <source>
        <dbReference type="PDB" id="3B2Z"/>
    </source>
</evidence>
<evidence type="ECO:0007829" key="20">
    <source>
        <dbReference type="PDB" id="4WK7"/>
    </source>
</evidence>
<proteinExistence type="evidence at protein level"/>
<name>ATS4_HUMAN</name>
<gene>
    <name type="primary">ADAMTS4</name>
    <name type="synonym">KIAA0688</name>
    <name type="ORF">UNQ769/PRO1563</name>
</gene>
<organism>
    <name type="scientific">Homo sapiens</name>
    <name type="common">Human</name>
    <dbReference type="NCBI Taxonomy" id="9606"/>
    <lineage>
        <taxon>Eukaryota</taxon>
        <taxon>Metazoa</taxon>
        <taxon>Chordata</taxon>
        <taxon>Craniata</taxon>
        <taxon>Vertebrata</taxon>
        <taxon>Euteleostomi</taxon>
        <taxon>Mammalia</taxon>
        <taxon>Eutheria</taxon>
        <taxon>Euarchontoglires</taxon>
        <taxon>Primates</taxon>
        <taxon>Haplorrhini</taxon>
        <taxon>Catarrhini</taxon>
        <taxon>Hominidae</taxon>
        <taxon>Homo</taxon>
    </lineage>
</organism>
<dbReference type="EC" id="3.4.24.82"/>
<dbReference type="EMBL" id="AF148213">
    <property type="protein sequence ID" value="AAD41494.1"/>
    <property type="molecule type" value="mRNA"/>
</dbReference>
<dbReference type="EMBL" id="DQ364570">
    <property type="protein sequence ID" value="ABC88384.1"/>
    <property type="status" value="ALT_FRAME"/>
    <property type="molecule type" value="mRNA"/>
</dbReference>
<dbReference type="EMBL" id="AY044847">
    <property type="protein sequence ID" value="AAL02262.1"/>
    <property type="molecule type" value="Genomic_DNA"/>
</dbReference>
<dbReference type="EMBL" id="AB014588">
    <property type="protein sequence ID" value="BAA31663.2"/>
    <property type="status" value="ALT_INIT"/>
    <property type="molecule type" value="mRNA"/>
</dbReference>
<dbReference type="EMBL" id="AY358886">
    <property type="protein sequence ID" value="AAQ89245.1"/>
    <property type="molecule type" value="mRNA"/>
</dbReference>
<dbReference type="EMBL" id="AL590714">
    <property type="status" value="NOT_ANNOTATED_CDS"/>
    <property type="molecule type" value="Genomic_DNA"/>
</dbReference>
<dbReference type="EMBL" id="BC063293">
    <property type="protein sequence ID" value="AAH63293.1"/>
    <property type="molecule type" value="mRNA"/>
</dbReference>
<dbReference type="CCDS" id="CCDS1223.1">
    <molecule id="O75173-1"/>
</dbReference>
<dbReference type="PIR" id="T00355">
    <property type="entry name" value="T00355"/>
</dbReference>
<dbReference type="RefSeq" id="NP_001307265.1">
    <molecule id="O75173-2"/>
    <property type="nucleotide sequence ID" value="NM_001320336.3"/>
</dbReference>
<dbReference type="RefSeq" id="NP_005090.3">
    <molecule id="O75173-1"/>
    <property type="nucleotide sequence ID" value="NM_005099.5"/>
</dbReference>
<dbReference type="PDB" id="2RJP">
    <property type="method" value="X-ray"/>
    <property type="resolution" value="2.80 A"/>
    <property type="chains" value="A/B/C/D=213-520"/>
</dbReference>
<dbReference type="PDB" id="3B2Z">
    <property type="method" value="X-ray"/>
    <property type="resolution" value="2.80 A"/>
    <property type="chains" value="A/B/C/D/E/F/G/H=213-520"/>
</dbReference>
<dbReference type="PDB" id="4WK7">
    <property type="method" value="X-ray"/>
    <property type="resolution" value="1.24 A"/>
    <property type="chains" value="A=213-439"/>
</dbReference>
<dbReference type="PDB" id="4WKE">
    <property type="method" value="X-ray"/>
    <property type="resolution" value="1.62 A"/>
    <property type="chains" value="A=213-439"/>
</dbReference>
<dbReference type="PDB" id="4WKI">
    <property type="method" value="X-ray"/>
    <property type="resolution" value="1.60 A"/>
    <property type="chains" value="A=213-439"/>
</dbReference>
<dbReference type="PDBsum" id="2RJP"/>
<dbReference type="PDBsum" id="3B2Z"/>
<dbReference type="PDBsum" id="4WK7"/>
<dbReference type="PDBsum" id="4WKE"/>
<dbReference type="PDBsum" id="4WKI"/>
<dbReference type="SMR" id="O75173"/>
<dbReference type="BioGRID" id="114885">
    <property type="interactions" value="74"/>
</dbReference>
<dbReference type="FunCoup" id="O75173">
    <property type="interactions" value="96"/>
</dbReference>
<dbReference type="IntAct" id="O75173">
    <property type="interactions" value="57"/>
</dbReference>
<dbReference type="STRING" id="9606.ENSP00000356975"/>
<dbReference type="BindingDB" id="O75173"/>
<dbReference type="ChEMBL" id="CHEMBL2318"/>
<dbReference type="DrugBank" id="DB07556">
    <property type="generic name" value="CGS-27023"/>
</dbReference>
<dbReference type="DrugBank" id="DB07926">
    <property type="generic name" value="N-[3-(N'-HYDROXYCARBOXAMIDO)-2-(2-METHYLPROPYL)-PROPANOYL]-O-TYROSINE-N-METHYLAMIDE"/>
</dbReference>
<dbReference type="DrugBank" id="DB06822">
    <property type="generic name" value="Tinzaparin"/>
</dbReference>
<dbReference type="GuidetoPHARMACOLOGY" id="1677"/>
<dbReference type="MEROPS" id="M12.221"/>
<dbReference type="TCDB" id="8.A.77.1.7">
    <property type="family name" value="the sheddase (sheddase) family"/>
</dbReference>
<dbReference type="GlyCosmos" id="O75173">
    <property type="glycosylation" value="2 sites, 2 glycans"/>
</dbReference>
<dbReference type="GlyGen" id="O75173">
    <property type="glycosylation" value="8 sites, 1 N-linked glycan (1 site), 2 O-linked glycans (1 site)"/>
</dbReference>
<dbReference type="iPTMnet" id="O75173"/>
<dbReference type="PhosphoSitePlus" id="O75173"/>
<dbReference type="BioMuta" id="ADAMTS4"/>
<dbReference type="MassIVE" id="O75173"/>
<dbReference type="PaxDb" id="9606-ENSP00000356975"/>
<dbReference type="PeptideAtlas" id="O75173"/>
<dbReference type="ProteomicsDB" id="49841">
    <molecule id="O75173-1"/>
</dbReference>
<dbReference type="ABCD" id="O75173">
    <property type="antibodies" value="1 sequenced antibody"/>
</dbReference>
<dbReference type="Antibodypedia" id="20503">
    <property type="antibodies" value="569 antibodies from 36 providers"/>
</dbReference>
<dbReference type="DNASU" id="9507"/>
<dbReference type="Ensembl" id="ENST00000367996.6">
    <molecule id="O75173-1"/>
    <property type="protein sequence ID" value="ENSP00000356975.4"/>
    <property type="gene ID" value="ENSG00000158859.10"/>
</dbReference>
<dbReference type="GeneID" id="9507"/>
<dbReference type="KEGG" id="hsa:9507"/>
<dbReference type="MANE-Select" id="ENST00000367996.6">
    <property type="protein sequence ID" value="ENSP00000356975.4"/>
    <property type="RefSeq nucleotide sequence ID" value="NM_005099.6"/>
    <property type="RefSeq protein sequence ID" value="NP_005090.3"/>
</dbReference>
<dbReference type="UCSC" id="uc001fyt.5">
    <molecule id="O75173-1"/>
    <property type="organism name" value="human"/>
</dbReference>
<dbReference type="AGR" id="HGNC:220"/>
<dbReference type="CTD" id="9507"/>
<dbReference type="DisGeNET" id="9507"/>
<dbReference type="GeneCards" id="ADAMTS4"/>
<dbReference type="HGNC" id="HGNC:220">
    <property type="gene designation" value="ADAMTS4"/>
</dbReference>
<dbReference type="HPA" id="ENSG00000158859">
    <property type="expression patterns" value="Tissue enhanced (adipose tissue, ovary)"/>
</dbReference>
<dbReference type="MIM" id="603876">
    <property type="type" value="gene"/>
</dbReference>
<dbReference type="neXtProt" id="NX_O75173"/>
<dbReference type="OpenTargets" id="ENSG00000158859"/>
<dbReference type="PharmGKB" id="PA24548"/>
<dbReference type="VEuPathDB" id="HostDB:ENSG00000158859"/>
<dbReference type="eggNOG" id="KOG3538">
    <property type="taxonomic scope" value="Eukaryota"/>
</dbReference>
<dbReference type="GeneTree" id="ENSGT00940000160966"/>
<dbReference type="HOGENOM" id="CLU_000660_3_0_1"/>
<dbReference type="InParanoid" id="O75173"/>
<dbReference type="OMA" id="HDDDKHC"/>
<dbReference type="OrthoDB" id="412680at2759"/>
<dbReference type="PAN-GO" id="O75173">
    <property type="GO annotations" value="3 GO annotations based on evolutionary models"/>
</dbReference>
<dbReference type="PhylomeDB" id="O75173"/>
<dbReference type="TreeFam" id="TF331949"/>
<dbReference type="BioCyc" id="MetaCyc:ENSG00000158859-MONOMER"/>
<dbReference type="PathwayCommons" id="O75173"/>
<dbReference type="Reactome" id="R-HSA-1474228">
    <property type="pathway name" value="Degradation of the extracellular matrix"/>
</dbReference>
<dbReference type="Reactome" id="R-HSA-5083635">
    <property type="pathway name" value="Defective B3GALTL causes PpS"/>
</dbReference>
<dbReference type="Reactome" id="R-HSA-5173214">
    <property type="pathway name" value="O-glycosylation of TSR domain-containing proteins"/>
</dbReference>
<dbReference type="SignaLink" id="O75173"/>
<dbReference type="SIGNOR" id="O75173"/>
<dbReference type="BioGRID-ORCS" id="9507">
    <property type="hits" value="11 hits in 1148 CRISPR screens"/>
</dbReference>
<dbReference type="ChiTaRS" id="ADAMTS4">
    <property type="organism name" value="human"/>
</dbReference>
<dbReference type="EvolutionaryTrace" id="O75173"/>
<dbReference type="GeneWiki" id="ADAMTS4"/>
<dbReference type="GenomeRNAi" id="9507"/>
<dbReference type="Pharos" id="O75173">
    <property type="development level" value="Tchem"/>
</dbReference>
<dbReference type="PRO" id="PR:O75173"/>
<dbReference type="Proteomes" id="UP000005640">
    <property type="component" value="Chromosome 1"/>
</dbReference>
<dbReference type="RNAct" id="O75173">
    <property type="molecule type" value="protein"/>
</dbReference>
<dbReference type="Bgee" id="ENSG00000158859">
    <property type="expression patterns" value="Expressed in left uterine tube and 95 other cell types or tissues"/>
</dbReference>
<dbReference type="ExpressionAtlas" id="O75173">
    <property type="expression patterns" value="baseline and differential"/>
</dbReference>
<dbReference type="GO" id="GO:0062023">
    <property type="term" value="C:collagen-containing extracellular matrix"/>
    <property type="evidence" value="ECO:0007005"/>
    <property type="project" value="UniProtKB"/>
</dbReference>
<dbReference type="GO" id="GO:0031012">
    <property type="term" value="C:extracellular matrix"/>
    <property type="evidence" value="ECO:0000318"/>
    <property type="project" value="GO_Central"/>
</dbReference>
<dbReference type="GO" id="GO:0005576">
    <property type="term" value="C:extracellular region"/>
    <property type="evidence" value="ECO:0000304"/>
    <property type="project" value="Reactome"/>
</dbReference>
<dbReference type="GO" id="GO:0005615">
    <property type="term" value="C:extracellular space"/>
    <property type="evidence" value="ECO:0000314"/>
    <property type="project" value="BHF-UCL"/>
</dbReference>
<dbReference type="GO" id="GO:0016607">
    <property type="term" value="C:nuclear speck"/>
    <property type="evidence" value="ECO:0000314"/>
    <property type="project" value="HPA"/>
</dbReference>
<dbReference type="GO" id="GO:0004222">
    <property type="term" value="F:metalloendopeptidase activity"/>
    <property type="evidence" value="ECO:0000314"/>
    <property type="project" value="BHF-UCL"/>
</dbReference>
<dbReference type="GO" id="GO:0008237">
    <property type="term" value="F:metallopeptidase activity"/>
    <property type="evidence" value="ECO:0000314"/>
    <property type="project" value="UniProtKB"/>
</dbReference>
<dbReference type="GO" id="GO:0008233">
    <property type="term" value="F:peptidase activity"/>
    <property type="evidence" value="ECO:0000314"/>
    <property type="project" value="UniProtKB"/>
</dbReference>
<dbReference type="GO" id="GO:0002020">
    <property type="term" value="F:protease binding"/>
    <property type="evidence" value="ECO:0000353"/>
    <property type="project" value="BHF-UCL"/>
</dbReference>
<dbReference type="GO" id="GO:0008270">
    <property type="term" value="F:zinc ion binding"/>
    <property type="evidence" value="ECO:0000314"/>
    <property type="project" value="UniProtKB"/>
</dbReference>
<dbReference type="GO" id="GO:0042742">
    <property type="term" value="P:defense response to bacterium"/>
    <property type="evidence" value="ECO:0007669"/>
    <property type="project" value="Ensembl"/>
</dbReference>
<dbReference type="GO" id="GO:0022617">
    <property type="term" value="P:extracellular matrix disassembly"/>
    <property type="evidence" value="ECO:0000304"/>
    <property type="project" value="Reactome"/>
</dbReference>
<dbReference type="GO" id="GO:0030198">
    <property type="term" value="P:extracellular matrix organization"/>
    <property type="evidence" value="ECO:0000318"/>
    <property type="project" value="GO_Central"/>
</dbReference>
<dbReference type="GO" id="GO:0030167">
    <property type="term" value="P:proteoglycan catabolic process"/>
    <property type="evidence" value="ECO:0000314"/>
    <property type="project" value="BHF-UCL"/>
</dbReference>
<dbReference type="GO" id="GO:0006508">
    <property type="term" value="P:proteolysis"/>
    <property type="evidence" value="ECO:0000318"/>
    <property type="project" value="GO_Central"/>
</dbReference>
<dbReference type="GO" id="GO:0001501">
    <property type="term" value="P:skeletal system development"/>
    <property type="evidence" value="ECO:0000304"/>
    <property type="project" value="ProtInc"/>
</dbReference>
<dbReference type="CDD" id="cd04273">
    <property type="entry name" value="ZnMc_ADAMTS_like"/>
    <property type="match status" value="1"/>
</dbReference>
<dbReference type="FunFam" id="2.20.100.10:FF:000006">
    <property type="entry name" value="A disintegrin and metalloproteinase with thrombospondin motifs 1"/>
    <property type="match status" value="1"/>
</dbReference>
<dbReference type="FunFam" id="2.60.120.830:FF:000001">
    <property type="entry name" value="A disintegrin and metalloproteinase with thrombospondin motifs 1"/>
    <property type="match status" value="1"/>
</dbReference>
<dbReference type="FunFam" id="3.40.1620.60:FF:000003">
    <property type="entry name" value="A disintegrin and metalloproteinase with thrombospondin motifs 1"/>
    <property type="match status" value="1"/>
</dbReference>
<dbReference type="FunFam" id="3.40.390.10:FF:000001">
    <property type="entry name" value="A disintegrin and metalloproteinase with thrombospondin motifs 1"/>
    <property type="match status" value="1"/>
</dbReference>
<dbReference type="Gene3D" id="2.60.120.830">
    <property type="match status" value="1"/>
</dbReference>
<dbReference type="Gene3D" id="3.40.1620.60">
    <property type="match status" value="1"/>
</dbReference>
<dbReference type="Gene3D" id="3.40.390.10">
    <property type="entry name" value="Collagenase (Catalytic Domain)"/>
    <property type="match status" value="1"/>
</dbReference>
<dbReference type="Gene3D" id="2.20.100.10">
    <property type="entry name" value="Thrombospondin type-1 (TSP1) repeat"/>
    <property type="match status" value="1"/>
</dbReference>
<dbReference type="InterPro" id="IPR006586">
    <property type="entry name" value="ADAM_Cys-rich"/>
</dbReference>
<dbReference type="InterPro" id="IPR013273">
    <property type="entry name" value="ADAMTS/ADAMTS-like"/>
</dbReference>
<dbReference type="InterPro" id="IPR050439">
    <property type="entry name" value="ADAMTS_ADAMTS-like"/>
</dbReference>
<dbReference type="InterPro" id="IPR041645">
    <property type="entry name" value="ADAMTS_CR_2"/>
</dbReference>
<dbReference type="InterPro" id="IPR045371">
    <property type="entry name" value="ADAMTS_CR_3"/>
</dbReference>
<dbReference type="InterPro" id="IPR010294">
    <property type="entry name" value="ADAMTS_spacer1"/>
</dbReference>
<dbReference type="InterPro" id="IPR024079">
    <property type="entry name" value="MetalloPept_cat_dom_sf"/>
</dbReference>
<dbReference type="InterPro" id="IPR001590">
    <property type="entry name" value="Peptidase_M12B"/>
</dbReference>
<dbReference type="InterPro" id="IPR000884">
    <property type="entry name" value="TSP1_rpt"/>
</dbReference>
<dbReference type="InterPro" id="IPR036383">
    <property type="entry name" value="TSP1_rpt_sf"/>
</dbReference>
<dbReference type="PANTHER" id="PTHR13723:SF38">
    <property type="entry name" value="A DISINTEGRIN AND METALLOPROTEINASE WITH THROMBOSPONDIN MOTIFS 4"/>
    <property type="match status" value="1"/>
</dbReference>
<dbReference type="PANTHER" id="PTHR13723">
    <property type="entry name" value="ADAMTS A DISINTEGRIN AND METALLOPROTEASE WITH THROMBOSPONDIN MOTIFS PROTEASE"/>
    <property type="match status" value="1"/>
</dbReference>
<dbReference type="Pfam" id="PF17771">
    <property type="entry name" value="ADAMTS_CR_2"/>
    <property type="match status" value="1"/>
</dbReference>
<dbReference type="Pfam" id="PF19236">
    <property type="entry name" value="ADAMTS_CR_3"/>
    <property type="match status" value="1"/>
</dbReference>
<dbReference type="Pfam" id="PF05986">
    <property type="entry name" value="ADAMTS_spacer1"/>
    <property type="match status" value="1"/>
</dbReference>
<dbReference type="Pfam" id="PF01421">
    <property type="entry name" value="Reprolysin"/>
    <property type="match status" value="1"/>
</dbReference>
<dbReference type="Pfam" id="PF00090">
    <property type="entry name" value="TSP_1"/>
    <property type="match status" value="1"/>
</dbReference>
<dbReference type="PRINTS" id="PR01857">
    <property type="entry name" value="ADAMTSFAMILY"/>
</dbReference>
<dbReference type="SMART" id="SM00608">
    <property type="entry name" value="ACR"/>
    <property type="match status" value="1"/>
</dbReference>
<dbReference type="SMART" id="SM00209">
    <property type="entry name" value="TSP1"/>
    <property type="match status" value="1"/>
</dbReference>
<dbReference type="SUPFAM" id="SSF55486">
    <property type="entry name" value="Metalloproteases ('zincins'), catalytic domain"/>
    <property type="match status" value="1"/>
</dbReference>
<dbReference type="SUPFAM" id="SSF82895">
    <property type="entry name" value="TSP-1 type 1 repeat"/>
    <property type="match status" value="1"/>
</dbReference>
<dbReference type="PROSITE" id="PS50215">
    <property type="entry name" value="ADAM_MEPRO"/>
    <property type="match status" value="1"/>
</dbReference>
<dbReference type="PROSITE" id="PS50092">
    <property type="entry name" value="TSP1"/>
    <property type="match status" value="1"/>
</dbReference>
<dbReference type="PROSITE" id="PS00142">
    <property type="entry name" value="ZINC_PROTEASE"/>
    <property type="match status" value="1"/>
</dbReference>
<comment type="function">
    <text evidence="6 7 14">Cleaves aggrecan, a cartilage proteoglycan, at the '392-Glu-|-Ala-393' site and may be involved in its turnover (PubMed:10356395, PubMed:10827174). Also cleaves COMP (PubMed:39672391). May play an important role in the destruction of aggrecan in arthritic diseases. Could be a critical factor in the exacerbation of neurodegeneration in Alzheimer disease.</text>
</comment>
<comment type="catalytic activity">
    <reaction>
        <text>Glutamyl endopeptidase. Bonds cleaved include 370-Thr-Glu-Gly-Glu-|-Ala-Arg-Gly-Ser-377 in the interglobular domain of mammalian aggrecan.</text>
        <dbReference type="EC" id="3.4.24.82"/>
    </reaction>
</comment>
<comment type="cofactor">
    <cofactor evidence="11">
        <name>Zn(2+)</name>
        <dbReference type="ChEBI" id="CHEBI:29105"/>
    </cofactor>
    <text evidence="11">Binds 1 zinc ion per subunit.</text>
</comment>
<comment type="subunit">
    <text evidence="11 12">Interacts with SRPX2.</text>
</comment>
<comment type="subcellular location">
    <subcellularLocation>
        <location evidence="1">Secreted</location>
        <location evidence="1">Extracellular space</location>
        <location evidence="1">Extracellular matrix</location>
    </subcellularLocation>
</comment>
<comment type="alternative products">
    <event type="alternative splicing"/>
    <isoform>
        <id>O75173-1</id>
        <name>1</name>
        <sequence type="displayed"/>
    </isoform>
    <isoform>
        <id>O75173-2</id>
        <name>2</name>
        <name>ADAMTS4_v1</name>
        <sequence type="described" ref="VSP_057293"/>
    </isoform>
</comment>
<comment type="tissue specificity">
    <text evidence="10 13">Expressed in brain, lung and heart (PubMed:23897278). Expressed at very low level in placenta and skeletal muscles (PubMed:23897278). Isoform 2: Detected in osteoarthritic synovium (PubMed:16723216, PubMed:23897278).</text>
</comment>
<comment type="induction">
    <text>By IL1/interleukin-1.</text>
</comment>
<comment type="domain">
    <text evidence="14">The spacer domain and the TSP type-1 domains are important for a tight interaction with the extracellular matrix. The spacer domain is also required for cleavage of COMP (PubMed:39672391).</text>
</comment>
<comment type="domain">
    <text>The conserved cysteine present in the cysteine-switch motif binds the catalytic zinc ion, thus inhibiting the enzyme. The dissociation of the cysteine from the zinc ion upon the activation-peptide release activates the enzyme.</text>
</comment>
<comment type="PTM">
    <text>The precursor is cleaved by a furin endopeptidase.</text>
</comment>
<comment type="PTM">
    <text evidence="1">Glycosylated. Can be O-fucosylated by POFUT2 on a serine or a threonine residue found within the consensus sequence C1-X(2)-(S/T)-C2-G of the TSP type-1 repeat domains where C1 and C2 are the first and second cysteine residue of the repeat, respectively. Fucosylated repeats can then be further glycosylated by the addition of a beta-1,3-glucose residue by the glucosyltransferase, B3GALTL. Fucosylation mediates the efficient secretion of ADAMTS family members. Can also be C-glycosylated with one or two mannose molecules on tryptophan residues within the consensus sequence W-X-X-W of the TPRs, and N-glycosylated. These other glycosylations can also facilitate secretion (By similarity).</text>
</comment>
<comment type="miscellaneous">
    <molecule>Isoform 2</molecule>
    <text evidence="13">Functional aggrecanase.</text>
</comment>
<comment type="caution">
    <text evidence="17">Has sometimes been referred to as ADAMTS2.</text>
</comment>
<comment type="sequence caution" evidence="17">
    <conflict type="frameshift">
        <sequence resource="EMBL-CDS" id="ABC88384"/>
    </conflict>
</comment>
<comment type="sequence caution" evidence="17">
    <conflict type="erroneous initiation">
        <sequence resource="EMBL-CDS" id="BAA31663"/>
    </conflict>
    <text>Extended N-terminus.</text>
</comment>
<accession>O75173</accession>
<accession>Q2HYD0</accession>
<accession>Q5VTW2</accession>
<accession>Q6P4Q8</accession>
<accession>Q6UWA8</accession>
<accession>Q9UN83</accession>
<protein>
    <recommendedName>
        <fullName>A disintegrin and metalloproteinase with thrombospondin motifs 4</fullName>
        <shortName>ADAM-TS 4</shortName>
        <shortName>ADAM-TS4</shortName>
        <shortName>ADAMTS-4</shortName>
        <ecNumber>3.4.24.82</ecNumber>
    </recommendedName>
    <alternativeName>
        <fullName>ADMP-1</fullName>
    </alternativeName>
    <alternativeName>
        <fullName>Aggrecanase-1</fullName>
    </alternativeName>
</protein>
<reference key="1">
    <citation type="journal article" date="1999" name="Science">
        <title>Purification and cloning of aggrecanase-1: a member of the ADAMTS family of proteins.</title>
        <authorList>
            <person name="Tortorella M.D."/>
            <person name="Burn T.C."/>
            <person name="Pratta M.A."/>
            <person name="Abbaszade I."/>
            <person name="Hollis J.M."/>
            <person name="Liu R.-Q."/>
            <person name="Rosenfeld S.A."/>
            <person name="Copeland R.A."/>
            <person name="Decicco C.P."/>
            <person name="Wynn R."/>
            <person name="Rockwell A."/>
            <person name="Yang F."/>
            <person name="Duke J.L."/>
            <person name="Solomon K."/>
            <person name="George H."/>
            <person name="Bruckner R."/>
            <person name="Nagase H."/>
            <person name="Itoh Y."/>
            <person name="Ellis D.M."/>
            <person name="Ross H."/>
            <person name="Wiswall B.H."/>
            <person name="Murphy K."/>
            <person name="Hillman M.C. Jr."/>
            <person name="Hollis G.F."/>
            <person name="Newton R.C."/>
            <person name="Magolda R.L."/>
            <person name="Trzaskos J.M."/>
            <person name="Arner E.C."/>
        </authorList>
    </citation>
    <scope>NUCLEOTIDE SEQUENCE [MRNA] (ISOFORM 1)</scope>
    <scope>PARTIAL PROTEIN SEQUENCE</scope>
    <scope>FUNCTION</scope>
    <scope>VARIANT ARG-626</scope>
</reference>
<reference key="2">
    <citation type="journal article" date="2006" name="Matrix Biol.">
        <title>An alternative spliced transcript of ADAMTS4 is present in human synovium from OA patients.</title>
        <authorList>
            <person name="Wainwright S.D."/>
            <person name="Bondeson J."/>
            <person name="Hughes C.E."/>
        </authorList>
    </citation>
    <scope>NUCLEOTIDE SEQUENCE [MRNA] OF 651-837 (ISOFORM 2)</scope>
    <scope>TISSUE SPECIFICITY (ISOFORM 2)</scope>
    <source>
        <tissue>Synovium</tissue>
    </source>
</reference>
<reference key="3">
    <citation type="submission" date="2001-07" db="EMBL/GenBank/DDBJ databases">
        <title>ADAMTS-4 genomic locus.</title>
        <authorList>
            <person name="Sawaji Y."/>
            <person name="Nagase H."/>
            <person name="Saklatvala J."/>
            <person name="Clark A.R."/>
        </authorList>
    </citation>
    <scope>NUCLEOTIDE SEQUENCE [GENOMIC DNA]</scope>
</reference>
<reference key="4">
    <citation type="journal article" date="1998" name="DNA Res.">
        <title>Prediction of the coding sequences of unidentified human genes. X. The complete sequences of 100 new cDNA clones from brain which can code for large proteins in vitro.</title>
        <authorList>
            <person name="Ishikawa K."/>
            <person name="Nagase T."/>
            <person name="Suyama M."/>
            <person name="Miyajima N."/>
            <person name="Tanaka A."/>
            <person name="Kotani H."/>
            <person name="Nomura N."/>
            <person name="Ohara O."/>
        </authorList>
    </citation>
    <scope>NUCLEOTIDE SEQUENCE [LARGE SCALE MRNA] (ISOFORM 1)</scope>
    <scope>VARIANTS THR-77 AND ARG-626</scope>
    <source>
        <tissue>Brain</tissue>
    </source>
</reference>
<reference key="5">
    <citation type="journal article" date="2003" name="Genome Res.">
        <title>The secreted protein discovery initiative (SPDI), a large-scale effort to identify novel human secreted and transmembrane proteins: a bioinformatics assessment.</title>
        <authorList>
            <person name="Clark H.F."/>
            <person name="Gurney A.L."/>
            <person name="Abaya E."/>
            <person name="Baker K."/>
            <person name="Baldwin D.T."/>
            <person name="Brush J."/>
            <person name="Chen J."/>
            <person name="Chow B."/>
            <person name="Chui C."/>
            <person name="Crowley C."/>
            <person name="Currell B."/>
            <person name="Deuel B."/>
            <person name="Dowd P."/>
            <person name="Eaton D."/>
            <person name="Foster J.S."/>
            <person name="Grimaldi C."/>
            <person name="Gu Q."/>
            <person name="Hass P.E."/>
            <person name="Heldens S."/>
            <person name="Huang A."/>
            <person name="Kim H.S."/>
            <person name="Klimowski L."/>
            <person name="Jin Y."/>
            <person name="Johnson S."/>
            <person name="Lee J."/>
            <person name="Lewis L."/>
            <person name="Liao D."/>
            <person name="Mark M.R."/>
            <person name="Robbie E."/>
            <person name="Sanchez C."/>
            <person name="Schoenfeld J."/>
            <person name="Seshagiri S."/>
            <person name="Simmons L."/>
            <person name="Singh J."/>
            <person name="Smith V."/>
            <person name="Stinson J."/>
            <person name="Vagts A."/>
            <person name="Vandlen R.L."/>
            <person name="Watanabe C."/>
            <person name="Wieand D."/>
            <person name="Woods K."/>
            <person name="Xie M.-H."/>
            <person name="Yansura D.G."/>
            <person name="Yi S."/>
            <person name="Yu G."/>
            <person name="Yuan J."/>
            <person name="Zhang M."/>
            <person name="Zhang Z."/>
            <person name="Goddard A.D."/>
            <person name="Wood W.I."/>
            <person name="Godowski P.J."/>
            <person name="Gray A.M."/>
        </authorList>
    </citation>
    <scope>NUCLEOTIDE SEQUENCE [LARGE SCALE MRNA] (ISOFORM 1)</scope>
    <scope>VARIANT ARG-626</scope>
</reference>
<reference key="6">
    <citation type="journal article" date="2006" name="Nature">
        <title>The DNA sequence and biological annotation of human chromosome 1.</title>
        <authorList>
            <person name="Gregory S.G."/>
            <person name="Barlow K.F."/>
            <person name="McLay K.E."/>
            <person name="Kaul R."/>
            <person name="Swarbreck D."/>
            <person name="Dunham A."/>
            <person name="Scott C.E."/>
            <person name="Howe K.L."/>
            <person name="Woodfine K."/>
            <person name="Spencer C.C.A."/>
            <person name="Jones M.C."/>
            <person name="Gillson C."/>
            <person name="Searle S."/>
            <person name="Zhou Y."/>
            <person name="Kokocinski F."/>
            <person name="McDonald L."/>
            <person name="Evans R."/>
            <person name="Phillips K."/>
            <person name="Atkinson A."/>
            <person name="Cooper R."/>
            <person name="Jones C."/>
            <person name="Hall R.E."/>
            <person name="Andrews T.D."/>
            <person name="Lloyd C."/>
            <person name="Ainscough R."/>
            <person name="Almeida J.P."/>
            <person name="Ambrose K.D."/>
            <person name="Anderson F."/>
            <person name="Andrew R.W."/>
            <person name="Ashwell R.I.S."/>
            <person name="Aubin K."/>
            <person name="Babbage A.K."/>
            <person name="Bagguley C.L."/>
            <person name="Bailey J."/>
            <person name="Beasley H."/>
            <person name="Bethel G."/>
            <person name="Bird C.P."/>
            <person name="Bray-Allen S."/>
            <person name="Brown J.Y."/>
            <person name="Brown A.J."/>
            <person name="Buckley D."/>
            <person name="Burton J."/>
            <person name="Bye J."/>
            <person name="Carder C."/>
            <person name="Chapman J.C."/>
            <person name="Clark S.Y."/>
            <person name="Clarke G."/>
            <person name="Clee C."/>
            <person name="Cobley V."/>
            <person name="Collier R.E."/>
            <person name="Corby N."/>
            <person name="Coville G.J."/>
            <person name="Davies J."/>
            <person name="Deadman R."/>
            <person name="Dunn M."/>
            <person name="Earthrowl M."/>
            <person name="Ellington A.G."/>
            <person name="Errington H."/>
            <person name="Frankish A."/>
            <person name="Frankland J."/>
            <person name="French L."/>
            <person name="Garner P."/>
            <person name="Garnett J."/>
            <person name="Gay L."/>
            <person name="Ghori M.R.J."/>
            <person name="Gibson R."/>
            <person name="Gilby L.M."/>
            <person name="Gillett W."/>
            <person name="Glithero R.J."/>
            <person name="Grafham D.V."/>
            <person name="Griffiths C."/>
            <person name="Griffiths-Jones S."/>
            <person name="Grocock R."/>
            <person name="Hammond S."/>
            <person name="Harrison E.S.I."/>
            <person name="Hart E."/>
            <person name="Haugen E."/>
            <person name="Heath P.D."/>
            <person name="Holmes S."/>
            <person name="Holt K."/>
            <person name="Howden P.J."/>
            <person name="Hunt A.R."/>
            <person name="Hunt S.E."/>
            <person name="Hunter G."/>
            <person name="Isherwood J."/>
            <person name="James R."/>
            <person name="Johnson C."/>
            <person name="Johnson D."/>
            <person name="Joy A."/>
            <person name="Kay M."/>
            <person name="Kershaw J.K."/>
            <person name="Kibukawa M."/>
            <person name="Kimberley A.M."/>
            <person name="King A."/>
            <person name="Knights A.J."/>
            <person name="Lad H."/>
            <person name="Laird G."/>
            <person name="Lawlor S."/>
            <person name="Leongamornlert D.A."/>
            <person name="Lloyd D.M."/>
            <person name="Loveland J."/>
            <person name="Lovell J."/>
            <person name="Lush M.J."/>
            <person name="Lyne R."/>
            <person name="Martin S."/>
            <person name="Mashreghi-Mohammadi M."/>
            <person name="Matthews L."/>
            <person name="Matthews N.S.W."/>
            <person name="McLaren S."/>
            <person name="Milne S."/>
            <person name="Mistry S."/>
            <person name="Moore M.J.F."/>
            <person name="Nickerson T."/>
            <person name="O'Dell C.N."/>
            <person name="Oliver K."/>
            <person name="Palmeiri A."/>
            <person name="Palmer S.A."/>
            <person name="Parker A."/>
            <person name="Patel D."/>
            <person name="Pearce A.V."/>
            <person name="Peck A.I."/>
            <person name="Pelan S."/>
            <person name="Phelps K."/>
            <person name="Phillimore B.J."/>
            <person name="Plumb R."/>
            <person name="Rajan J."/>
            <person name="Raymond C."/>
            <person name="Rouse G."/>
            <person name="Saenphimmachak C."/>
            <person name="Sehra H.K."/>
            <person name="Sheridan E."/>
            <person name="Shownkeen R."/>
            <person name="Sims S."/>
            <person name="Skuce C.D."/>
            <person name="Smith M."/>
            <person name="Steward C."/>
            <person name="Subramanian S."/>
            <person name="Sycamore N."/>
            <person name="Tracey A."/>
            <person name="Tromans A."/>
            <person name="Van Helmond Z."/>
            <person name="Wall M."/>
            <person name="Wallis J.M."/>
            <person name="White S."/>
            <person name="Whitehead S.L."/>
            <person name="Wilkinson J.E."/>
            <person name="Willey D.L."/>
            <person name="Williams H."/>
            <person name="Wilming L."/>
            <person name="Wray P.W."/>
            <person name="Wu Z."/>
            <person name="Coulson A."/>
            <person name="Vaudin M."/>
            <person name="Sulston J.E."/>
            <person name="Durbin R.M."/>
            <person name="Hubbard T."/>
            <person name="Wooster R."/>
            <person name="Dunham I."/>
            <person name="Carter N.P."/>
            <person name="McVean G."/>
            <person name="Ross M.T."/>
            <person name="Harrow J."/>
            <person name="Olson M.V."/>
            <person name="Beck S."/>
            <person name="Rogers J."/>
            <person name="Bentley D.R."/>
        </authorList>
    </citation>
    <scope>NUCLEOTIDE SEQUENCE [LARGE SCALE GENOMIC DNA]</scope>
</reference>
<reference key="7">
    <citation type="journal article" date="2004" name="Genome Res.">
        <title>The status, quality, and expansion of the NIH full-length cDNA project: the Mammalian Gene Collection (MGC).</title>
        <authorList>
            <consortium name="The MGC Project Team"/>
        </authorList>
    </citation>
    <scope>NUCLEOTIDE SEQUENCE [LARGE SCALE MRNA] (ISOFORM 1)</scope>
    <scope>VARIANTS ILE-4; ASN-304; VAL-369; THR-552 AND ALA-564</scope>
    <source>
        <tissue>Brain</tissue>
    </source>
</reference>
<reference key="8">
    <citation type="journal article" date="2000" name="J. Biol. Chem.">
        <title>The thrombospondin motif of aggrecanase-1 (ADAMTS-4) is critical for aggrecan substrate recognition and cleavage.</title>
        <authorList>
            <person name="Tortorella M.D."/>
            <person name="Pratta M.A."/>
            <person name="Liu R.-Q."/>
            <person name="Abbaszade I."/>
            <person name="Ross H."/>
            <person name="Burn T.C."/>
            <person name="Arner E.C."/>
        </authorList>
    </citation>
    <scope>PARTIAL PROTEIN SEQUENCE</scope>
    <scope>CHARACTERIZATION</scope>
</reference>
<reference key="9">
    <citation type="journal article" date="2008" name="Hum. Mol. Genet.">
        <title>Epileptic and developmental disorders of the speech cortex: ligand/receptor interaction of wild-type and mutant SRPX2 with the plasminogen activator receptor uPAR.</title>
        <authorList>
            <person name="Royer-Zemmour B."/>
            <person name="Ponsole-Lenfant M."/>
            <person name="Gara H."/>
            <person name="Roll P."/>
            <person name="Leveque C."/>
            <person name="Massacrier A."/>
            <person name="Ferracci G."/>
            <person name="Cillario J."/>
            <person name="Robaglia-Schlupp A."/>
            <person name="Vincentelli R."/>
            <person name="Cau P."/>
            <person name="Szepetowski P."/>
        </authorList>
    </citation>
    <scope>INTERACTION WITH SRPX2</scope>
</reference>
<reference key="10">
    <citation type="journal article" date="2013" name="Arthritis Rheum.">
        <title>ADAMTS-4_v1 is a splice variant of ADAMTS-4 that is expressed as a protein in human synovium and cleaves aggrecan at the interglobular domain.</title>
        <authorList>
            <person name="Wainwright S.D."/>
            <person name="Bondeson J."/>
            <person name="Caterson B."/>
            <person name="Hughes C.E."/>
        </authorList>
    </citation>
    <scope>ALTERNATIVE SPLICING</scope>
    <scope>TISSUE SPECIFICITY (ISOFORM 2)</scope>
</reference>
<reference key="11">
    <citation type="journal article" date="2025" name="Matrix Biol.">
        <title>Cleavage of Cartilage Oligomeric Matrix Protein (COMP) by ADAMTS4 generates a neoepitope associated with osteoarthritis and other forms of degenerative joint disease.</title>
        <authorList>
            <person name="de Groot R."/>
            <person name="Folgado P.B."/>
            <person name="Yamamoto K."/>
            <person name="Martin D.R."/>
            <person name="Koch C.D."/>
            <person name="Debruin D."/>
            <person name="Blagg S."/>
            <person name="Minns A.F."/>
            <person name="Bhutada S."/>
            <person name="Ahnstroem J."/>
            <person name="Larkin J."/>
            <person name="Aspberg A."/>
            <person name="Oennerfjord P."/>
            <person name="Apte S.S."/>
            <person name="Santamaria S."/>
        </authorList>
    </citation>
    <scope>FUNCTION</scope>
    <scope>DOMAIN</scope>
</reference>
<reference key="12">
    <citation type="journal article" date="2008" name="Protein Sci.">
        <title>Crystal structures of the two major aggrecan degrading enzymes, ADAMTS4 and ADAMTS5.</title>
        <authorList>
            <person name="Mosyak L."/>
            <person name="Georgiadis K."/>
            <person name="Shane T."/>
            <person name="Svenson K."/>
            <person name="Hebert T."/>
            <person name="McDonagh T."/>
            <person name="Mackie S."/>
            <person name="Olland S."/>
            <person name="Lin L."/>
            <person name="Zhong X."/>
            <person name="Kriz R."/>
            <person name="Reifenberg E.L."/>
            <person name="Collins-Racie L.A."/>
            <person name="Corcoran C."/>
            <person name="Freeman B."/>
            <person name="Zollner R."/>
            <person name="Marvell T."/>
            <person name="Vera M."/>
            <person name="Sum P.E."/>
            <person name="Lavallie E.R."/>
            <person name="Stahl M."/>
            <person name="Somers W."/>
        </authorList>
    </citation>
    <scope>X-RAY CRYSTALLOGRAPHY (2.8 ANGSTROMS) OF 213-520 ALONE AND IN COMPLEX WITH INHIBITOR</scope>
    <scope>ACTIVE SITE</scope>
    <scope>COFACTOR</scope>
    <scope>ZINC-BINDING SITES</scope>
    <scope>DISULFIDE BONDS</scope>
</reference>
<feature type="signal peptide" evidence="2">
    <location>
        <begin position="1"/>
        <end position="51"/>
    </location>
</feature>
<feature type="propeptide" id="PRO_0000029164">
    <location>
        <begin position="52"/>
        <end position="212"/>
    </location>
</feature>
<feature type="chain" id="PRO_0000029165" description="A disintegrin and metalloproteinase with thrombospondin motifs 4">
    <location>
        <begin position="213"/>
        <end position="837"/>
    </location>
</feature>
<feature type="domain" description="Peptidase M12B" evidence="4">
    <location>
        <begin position="218"/>
        <end position="428"/>
    </location>
</feature>
<feature type="domain" description="Disintegrin">
    <location>
        <begin position="437"/>
        <end position="519"/>
    </location>
</feature>
<feature type="domain" description="TSP type-1" evidence="3">
    <location>
        <begin position="520"/>
        <end position="575"/>
    </location>
</feature>
<feature type="region of interest" description="Spacer">
    <location>
        <begin position="686"/>
        <end position="837"/>
    </location>
</feature>
<feature type="short sequence motif" description="Cysteine switch" evidence="1">
    <location>
        <begin position="192"/>
        <end position="199"/>
    </location>
</feature>
<feature type="active site" evidence="4 5 11">
    <location>
        <position position="362"/>
    </location>
</feature>
<feature type="binding site" description="in inhibited form" evidence="1">
    <location>
        <position position="194"/>
    </location>
    <ligand>
        <name>Zn(2+)</name>
        <dbReference type="ChEBI" id="CHEBI:29105"/>
        <note>catalytic</note>
    </ligand>
</feature>
<feature type="binding site" evidence="11">
    <location>
        <position position="361"/>
    </location>
    <ligand>
        <name>Zn(2+)</name>
        <dbReference type="ChEBI" id="CHEBI:29105"/>
        <note>catalytic</note>
    </ligand>
</feature>
<feature type="binding site" evidence="11">
    <location>
        <position position="365"/>
    </location>
    <ligand>
        <name>Zn(2+)</name>
        <dbReference type="ChEBI" id="CHEBI:29105"/>
        <note>catalytic</note>
    </ligand>
</feature>
<feature type="binding site" evidence="11">
    <location>
        <position position="371"/>
    </location>
    <ligand>
        <name>Zn(2+)</name>
        <dbReference type="ChEBI" id="CHEBI:29105"/>
        <note>catalytic</note>
    </ligand>
</feature>
<feature type="glycosylation site" description="N-linked (GlcNAc...) asparagine" evidence="2">
    <location>
        <position position="68"/>
    </location>
</feature>
<feature type="disulfide bond" evidence="11">
    <location>
        <begin position="293"/>
        <end position="345"/>
    </location>
</feature>
<feature type="disulfide bond" evidence="11">
    <location>
        <begin position="322"/>
        <end position="327"/>
    </location>
</feature>
<feature type="disulfide bond" evidence="11">
    <location>
        <begin position="339"/>
        <end position="423"/>
    </location>
</feature>
<feature type="disulfide bond" evidence="11">
    <location>
        <begin position="377"/>
        <end position="407"/>
    </location>
</feature>
<feature type="disulfide bond" evidence="11">
    <location>
        <begin position="449"/>
        <end position="472"/>
    </location>
</feature>
<feature type="disulfide bond" evidence="11">
    <location>
        <begin position="460"/>
        <end position="482"/>
    </location>
</feature>
<feature type="disulfide bond" evidence="11">
    <location>
        <begin position="467"/>
        <end position="501"/>
    </location>
</feature>
<feature type="disulfide bond" evidence="11">
    <location>
        <begin position="495"/>
        <end position="506"/>
    </location>
</feature>
<feature type="disulfide bond" evidence="1">
    <location>
        <begin position="532"/>
        <end position="569"/>
    </location>
</feature>
<feature type="disulfide bond" evidence="1">
    <location>
        <begin position="536"/>
        <end position="574"/>
    </location>
</feature>
<feature type="disulfide bond" evidence="1">
    <location>
        <begin position="547"/>
        <end position="559"/>
    </location>
</feature>
<feature type="splice variant" id="VSP_057293" description="In isoform 2." evidence="16">
    <original>YGYNNVVTIPAGATHILVRQQGNPGHRSIYLALKLPDGSYALNGEYTLMPSPTDVVLPGAVSLRYSGATAASETLSGHGPLAQPLTLQVLVAGNPQDTRLRYSFFVPRPTPSTPRPTPQDWLHRRAQILEILRRRPWAGRK</original>
    <variation>CGTAWGSQLALQRGHCSLRDTVRPWATGPAFDTASPSGWQPPGHTPPIQLLRAPADPFNATPHSPGLAAPKSTDSGDPSAAPLGGQEITSLSRLPFLGTGASDLAGRKRELLLLPHAKTQWGGAVGVRPAPPLCPNAQAGPALVSCPGRQ</variation>
    <location>
        <begin position="697"/>
        <end position="837"/>
    </location>
</feature>
<feature type="sequence variant" id="VAR_030636" description="In dbSNP:rs17855814." evidence="9">
    <original>T</original>
    <variation>I</variation>
    <location>
        <position position="4"/>
    </location>
</feature>
<feature type="sequence variant" id="VAR_057073" description="In dbSNP:rs34448954." evidence="15">
    <original>A</original>
    <variation>T</variation>
    <location>
        <position position="77"/>
    </location>
</feature>
<feature type="sequence variant" id="VAR_030637" description="In dbSNP:rs17855813." evidence="9">
    <original>D</original>
    <variation>N</variation>
    <location>
        <position position="304"/>
    </location>
</feature>
<feature type="sequence variant" id="VAR_030638" description="In dbSNP:rs17855812." evidence="9">
    <original>M</original>
    <variation>V</variation>
    <location>
        <position position="369"/>
    </location>
</feature>
<feature type="sequence variant" id="VAR_030639" description="In dbSNP:rs17855815." evidence="9">
    <original>P</original>
    <variation>T</variation>
    <location>
        <position position="552"/>
    </location>
</feature>
<feature type="sequence variant" id="VAR_030640" description="In dbSNP:rs17855816." evidence="9">
    <original>T</original>
    <variation>A</variation>
    <location>
        <position position="564"/>
    </location>
</feature>
<feature type="sequence variant" id="VAR_022450" description="In dbSNP:rs4233367." evidence="6 8 15">
    <original>Q</original>
    <variation>R</variation>
    <location>
        <position position="626"/>
    </location>
</feature>
<feature type="sequence variant" id="VAR_030641" description="In dbSNP:rs11807350.">
    <original>R</original>
    <variation>K</variation>
    <location>
        <position position="836"/>
    </location>
</feature>
<feature type="sequence conflict" description="In Ref. 5; AAQ89245." evidence="17" ref="5">
    <original>D</original>
    <variation>G</variation>
    <location>
        <position position="306"/>
    </location>
</feature>
<feature type="sequence conflict" description="In Ref. 3; AAL02262." evidence="17" ref="3">
    <original>G</original>
    <variation>R</variation>
    <location>
        <position position="682"/>
    </location>
</feature>
<feature type="strand" evidence="20">
    <location>
        <begin position="219"/>
        <end position="226"/>
    </location>
</feature>
<feature type="helix" evidence="20">
    <location>
        <begin position="228"/>
        <end position="234"/>
    </location>
</feature>
<feature type="helix" evidence="20">
    <location>
        <begin position="235"/>
        <end position="237"/>
    </location>
</feature>
<feature type="helix" evidence="20">
    <location>
        <begin position="238"/>
        <end position="254"/>
    </location>
</feature>
<feature type="helix" evidence="20">
    <location>
        <begin position="256"/>
        <end position="258"/>
    </location>
</feature>
<feature type="strand" evidence="20">
    <location>
        <begin position="263"/>
        <end position="271"/>
    </location>
</feature>
<feature type="strand" evidence="19">
    <location>
        <begin position="274"/>
        <end position="276"/>
    </location>
</feature>
<feature type="helix" evidence="20">
    <location>
        <begin position="285"/>
        <end position="297"/>
    </location>
</feature>
<feature type="strand" evidence="18">
    <location>
        <begin position="304"/>
        <end position="306"/>
    </location>
</feature>
<feature type="strand" evidence="20">
    <location>
        <begin position="311"/>
        <end position="317"/>
    </location>
</feature>
<feature type="turn" evidence="19">
    <location>
        <begin position="322"/>
        <end position="324"/>
    </location>
</feature>
<feature type="strand" evidence="20">
    <location>
        <begin position="331"/>
        <end position="333"/>
    </location>
</feature>
<feature type="turn" evidence="20">
    <location>
        <begin position="341"/>
        <end position="343"/>
    </location>
</feature>
<feature type="strand" evidence="20">
    <location>
        <begin position="345"/>
        <end position="349"/>
    </location>
</feature>
<feature type="strand" evidence="20">
    <location>
        <begin position="352"/>
        <end position="354"/>
    </location>
</feature>
<feature type="helix" evidence="20">
    <location>
        <begin position="355"/>
        <end position="366"/>
    </location>
</feature>
<feature type="helix" evidence="20">
    <location>
        <begin position="375"/>
        <end position="381"/>
    </location>
</feature>
<feature type="strand" evidence="20">
    <location>
        <begin position="392"/>
        <end position="394"/>
    </location>
</feature>
<feature type="helix" evidence="20">
    <location>
        <begin position="406"/>
        <end position="417"/>
    </location>
</feature>
<feature type="turn" evidence="20">
    <location>
        <begin position="418"/>
        <end position="423"/>
    </location>
</feature>
<feature type="helix" evidence="18">
    <location>
        <begin position="439"/>
        <end position="442"/>
    </location>
</feature>
<feature type="helix" evidence="18">
    <location>
        <begin position="445"/>
        <end position="453"/>
    </location>
</feature>
<feature type="strand" evidence="19">
    <location>
        <begin position="463"/>
        <end position="465"/>
    </location>
</feature>
<feature type="turn" evidence="19">
    <location>
        <begin position="466"/>
        <end position="468"/>
    </location>
</feature>
<feature type="strand" evidence="18">
    <location>
        <begin position="472"/>
        <end position="476"/>
    </location>
</feature>
<feature type="strand" evidence="18">
    <location>
        <begin position="479"/>
        <end position="483"/>
    </location>
</feature>
<feature type="strand" evidence="18">
    <location>
        <begin position="494"/>
        <end position="496"/>
    </location>
</feature>
<feature type="strand" evidence="18">
    <location>
        <begin position="499"/>
        <end position="502"/>
    </location>
</feature>
<feature type="strand" evidence="18">
    <location>
        <begin position="505"/>
        <end position="507"/>
    </location>
</feature>
<keyword id="KW-0002">3D-structure</keyword>
<keyword id="KW-0025">Alternative splicing</keyword>
<keyword id="KW-0165">Cleavage on pair of basic residues</keyword>
<keyword id="KW-0903">Direct protein sequencing</keyword>
<keyword id="KW-1015">Disulfide bond</keyword>
<keyword id="KW-0272">Extracellular matrix</keyword>
<keyword id="KW-0325">Glycoprotein</keyword>
<keyword id="KW-0378">Hydrolase</keyword>
<keyword id="KW-0479">Metal-binding</keyword>
<keyword id="KW-0482">Metalloprotease</keyword>
<keyword id="KW-0645">Protease</keyword>
<keyword id="KW-1267">Proteomics identification</keyword>
<keyword id="KW-1185">Reference proteome</keyword>
<keyword id="KW-0964">Secreted</keyword>
<keyword id="KW-0732">Signal</keyword>
<keyword id="KW-0862">Zinc</keyword>
<keyword id="KW-0865">Zymogen</keyword>
<sequence>MSQTGSHPGRGLAGRWLWGAQPCLLLPIVPLSWLVWLLLLLLASLLPSARLASPLPREEEIVFPEKLNGSVLPGSGAPARLLCRLQAFGETLLLELEQDSGVQVEGLTVQYLGQAPELLGGAEPGTYLTGTINGDPESVASLHWDGGALLGVLQYRGAELHLQPLEGGTPNSAGGPGAHILRRKSPASGQGPMCNVKAPLGSPSPRPRRAKRFASLSRFVETLVVADDKMAAFHGAGLKRYLLTVMAAAAKAFKHPSIRNPVSLVVTRLVILGSGEEGPQVGPSAAQTLRSFCAWQRGLNTPEDSDPDHFDTAILFTRQDLCGVSTCDTLGMADVGTVCDPARSCAIVEDDGLQSAFTAAHELGHVFNMLHDNSKPCISLNGPLSTSRHVMAPVMAHVDPEEPWSPCSARFITDFLDNGYGHCLLDKPEAPLHLPVTFPGKDYDADRQCQLTFGPDSRHCPQLPPPCAALWCSGHLNGHAMCQTKHSPWADGTPCGPAQACMGGRCLHMDQLQDFNIPQAGGWGPWGPWGDCSRTCGGGVQFSSRDCTRPVPRNGGKYCEGRRTRFRSCNTEDCPTGSALTFREEQCAAYNHRTDLFKSFPGPMDWVPRYTGVAPQDQCKLTCQAQALGYYYVLEPRVVDGTPCSPDSSSVCVQGRCIHAGCDRIIGSKKKFDKCMVCGGDGSGCSKQSGSFRKFRYGYNNVVTIPAGATHILVRQQGNPGHRSIYLALKLPDGSYALNGEYTLMPSPTDVVLPGAVSLRYSGATAASETLSGHGPLAQPLTLQVLVAGNPQDTRLRYSFFVPRPTPSTPRPTPQDWLHRRAQILEILRRRPWAGRK</sequence>